<gene>
    <name type="primary">rglA</name>
    <name type="ORF">ACLA_054660</name>
</gene>
<accession>A1C995</accession>
<name>RGLA_ASPCL</name>
<comment type="function">
    <text evidence="1">Pectinolytic enzymes consist of four classes of enzymes: pectin lyase, polygalacturonase, pectin methylesterase and rhamnogalacturonase. Degrades the rhamnogalacturonan I (RG-I) backbone of pectin. Active against linseed rhamnogalacturonan (By similarity).</text>
</comment>
<comment type="catalytic activity">
    <reaction>
        <text>Endotype eliminative cleavage of L-alpha-rhamnopyranosyl-(1-&gt;4)-alpha-D-galactopyranosyluronic acid bonds of rhamnogalacturonan I domains in ramified hairy regions of pectin leaving L-rhamnopyranose at the reducing end and 4-deoxy-4,5-unsaturated D-galactopyranosyluronic acid at the non-reducing end.</text>
        <dbReference type="EC" id="4.2.2.23"/>
    </reaction>
</comment>
<comment type="subcellular location">
    <subcellularLocation>
        <location evidence="1">Secreted</location>
    </subcellularLocation>
</comment>
<comment type="similarity">
    <text evidence="3">Belongs to the polysaccharide lyase 4 family.</text>
</comment>
<keyword id="KW-0119">Carbohydrate metabolism</keyword>
<keyword id="KW-0961">Cell wall biogenesis/degradation</keyword>
<keyword id="KW-1015">Disulfide bond</keyword>
<keyword id="KW-0325">Glycoprotein</keyword>
<keyword id="KW-0456">Lyase</keyword>
<keyword id="KW-0624">Polysaccharide degradation</keyword>
<keyword id="KW-1185">Reference proteome</keyword>
<keyword id="KW-0964">Secreted</keyword>
<keyword id="KW-0732">Signal</keyword>
<feature type="signal peptide" evidence="2">
    <location>
        <begin position="1"/>
        <end position="20"/>
    </location>
</feature>
<feature type="chain" id="PRO_0000394364" description="Probable rhamnogalacturonate lyase A">
    <location>
        <begin position="21"/>
        <end position="528"/>
    </location>
</feature>
<feature type="glycosylation site" description="N-linked (GlcNAc...) asparagine" evidence="2">
    <location>
        <position position="56"/>
    </location>
</feature>
<feature type="glycosylation site" description="N-linked (GlcNAc...) asparagine" evidence="2">
    <location>
        <position position="351"/>
    </location>
</feature>
<feature type="disulfide bond" evidence="1">
    <location>
        <begin position="50"/>
        <end position="93"/>
    </location>
</feature>
<feature type="disulfide bond" evidence="1">
    <location>
        <begin position="184"/>
        <end position="193"/>
    </location>
</feature>
<sequence length="528" mass="56639">MFFQTGLLLSLSLWTKVAYAAFGITTSSSSYVIDAGSANPLKFTVSRSSCDITSINYSGTELQYASKGSHISSGLGRATVSATQDGDYIKVTCATSTLTHYMVVHHGDSTIHMATHITAEPSIGELRFIARLKSDVLPNEEPFGDVSTTAGGTAIEGSDVFLVNGKTRSKFYSSQRFIDDQRHCISGSAHRVCMILNQYESSSGGPFHRDIDANNGGGFNALYWYMNSGHVQTEPYRMGLHGPYSMVFSRSGMPGTNIDTSFFANLNIKGYVPASGRGTVTGKASGADSRMKWVVHWHNTAAQYWTYTASDGSFTSPAMKPGTYTMVYYQGEYKVAETSVTVRAGSKITKNISGSVKTGKTIFKIGEWDGQPTGFRNADKQLRMHPSDSRMAAWGPLTYTVGRSAPSDFPMAVFKSVNNPVTIKFTASAAQTAAATLRIGTTLSFAGGRPQAKINSYTAAAPPAPKNLDSRGVTRGAYRGLGEVYDVAIPAGTIVAGVNTITISVVSGNSGEKFLSPNFVFDCVELFQ</sequence>
<protein>
    <recommendedName>
        <fullName>Probable rhamnogalacturonate lyase A</fullName>
        <ecNumber>4.2.2.23</ecNumber>
    </recommendedName>
</protein>
<reference key="1">
    <citation type="journal article" date="2008" name="PLoS Genet.">
        <title>Genomic islands in the pathogenic filamentous fungus Aspergillus fumigatus.</title>
        <authorList>
            <person name="Fedorova N.D."/>
            <person name="Khaldi N."/>
            <person name="Joardar V.S."/>
            <person name="Maiti R."/>
            <person name="Amedeo P."/>
            <person name="Anderson M.J."/>
            <person name="Crabtree J."/>
            <person name="Silva J.C."/>
            <person name="Badger J.H."/>
            <person name="Albarraq A."/>
            <person name="Angiuoli S."/>
            <person name="Bussey H."/>
            <person name="Bowyer P."/>
            <person name="Cotty P.J."/>
            <person name="Dyer P.S."/>
            <person name="Egan A."/>
            <person name="Galens K."/>
            <person name="Fraser-Liggett C.M."/>
            <person name="Haas B.J."/>
            <person name="Inman J.M."/>
            <person name="Kent R."/>
            <person name="Lemieux S."/>
            <person name="Malavazi I."/>
            <person name="Orvis J."/>
            <person name="Roemer T."/>
            <person name="Ronning C.M."/>
            <person name="Sundaram J.P."/>
            <person name="Sutton G."/>
            <person name="Turner G."/>
            <person name="Venter J.C."/>
            <person name="White O.R."/>
            <person name="Whitty B.R."/>
            <person name="Youngman P."/>
            <person name="Wolfe K.H."/>
            <person name="Goldman G.H."/>
            <person name="Wortman J.R."/>
            <person name="Jiang B."/>
            <person name="Denning D.W."/>
            <person name="Nierman W.C."/>
        </authorList>
    </citation>
    <scope>NUCLEOTIDE SEQUENCE [LARGE SCALE GENOMIC DNA]</scope>
    <source>
        <strain>ATCC 1007 / CBS 513.65 / DSM 816 / NCTC 3887 / NRRL 1 / QM 1276 / 107</strain>
    </source>
</reference>
<proteinExistence type="inferred from homology"/>
<dbReference type="EC" id="4.2.2.23"/>
<dbReference type="EMBL" id="DS027048">
    <property type="protein sequence ID" value="EAW13419.1"/>
    <property type="molecule type" value="Genomic_DNA"/>
</dbReference>
<dbReference type="RefSeq" id="XP_001274845.1">
    <property type="nucleotide sequence ID" value="XM_001274844.1"/>
</dbReference>
<dbReference type="SMR" id="A1C995"/>
<dbReference type="STRING" id="344612.A1C995"/>
<dbReference type="GlyCosmos" id="A1C995">
    <property type="glycosylation" value="2 sites, No reported glycans"/>
</dbReference>
<dbReference type="EnsemblFungi" id="EAW13419">
    <property type="protein sequence ID" value="EAW13419"/>
    <property type="gene ID" value="ACLA_054660"/>
</dbReference>
<dbReference type="GeneID" id="4707026"/>
<dbReference type="KEGG" id="act:ACLA_054660"/>
<dbReference type="VEuPathDB" id="FungiDB:ACLA_054660"/>
<dbReference type="eggNOG" id="ENOG502QTKY">
    <property type="taxonomic scope" value="Eukaryota"/>
</dbReference>
<dbReference type="HOGENOM" id="CLU_037882_1_1_1"/>
<dbReference type="OMA" id="FKIGDWD"/>
<dbReference type="OrthoDB" id="114708at2759"/>
<dbReference type="Proteomes" id="UP000006701">
    <property type="component" value="Unassembled WGS sequence"/>
</dbReference>
<dbReference type="GO" id="GO:0005576">
    <property type="term" value="C:extracellular region"/>
    <property type="evidence" value="ECO:0007669"/>
    <property type="project" value="UniProtKB-SubCell"/>
</dbReference>
<dbReference type="GO" id="GO:0030246">
    <property type="term" value="F:carbohydrate binding"/>
    <property type="evidence" value="ECO:0007669"/>
    <property type="project" value="InterPro"/>
</dbReference>
<dbReference type="GO" id="GO:0102210">
    <property type="term" value="F:rhamnogalacturonan endolyase activity"/>
    <property type="evidence" value="ECO:0007669"/>
    <property type="project" value="UniProtKB-EC"/>
</dbReference>
<dbReference type="GO" id="GO:0071555">
    <property type="term" value="P:cell wall organization"/>
    <property type="evidence" value="ECO:0007669"/>
    <property type="project" value="UniProtKB-KW"/>
</dbReference>
<dbReference type="GO" id="GO:0045490">
    <property type="term" value="P:pectin catabolic process"/>
    <property type="evidence" value="ECO:0007669"/>
    <property type="project" value="TreeGrafter"/>
</dbReference>
<dbReference type="CDD" id="cd10317">
    <property type="entry name" value="RGL4_C"/>
    <property type="match status" value="1"/>
</dbReference>
<dbReference type="CDD" id="cd10316">
    <property type="entry name" value="RGL4_M"/>
    <property type="match status" value="1"/>
</dbReference>
<dbReference type="CDD" id="cd10320">
    <property type="entry name" value="RGL4_N"/>
    <property type="match status" value="1"/>
</dbReference>
<dbReference type="FunFam" id="2.60.120.260:FF:000102">
    <property type="entry name" value="Rhamnogalacturonate lyase A"/>
    <property type="match status" value="1"/>
</dbReference>
<dbReference type="FunFam" id="2.60.40.1120:FF:000017">
    <property type="entry name" value="Rhamnogalacturonate lyase A"/>
    <property type="match status" value="1"/>
</dbReference>
<dbReference type="FunFam" id="2.70.98.10:FF:000020">
    <property type="entry name" value="Rhamnogalacturonate lyase A"/>
    <property type="match status" value="1"/>
</dbReference>
<dbReference type="Gene3D" id="2.70.98.10">
    <property type="match status" value="1"/>
</dbReference>
<dbReference type="Gene3D" id="2.60.40.1120">
    <property type="entry name" value="Carboxypeptidase-like, regulatory domain"/>
    <property type="match status" value="1"/>
</dbReference>
<dbReference type="Gene3D" id="2.60.120.260">
    <property type="entry name" value="Galactose-binding domain-like"/>
    <property type="match status" value="1"/>
</dbReference>
<dbReference type="InterPro" id="IPR013784">
    <property type="entry name" value="Carb-bd-like_fold"/>
</dbReference>
<dbReference type="InterPro" id="IPR011013">
    <property type="entry name" value="Gal_mutarotase_sf_dom"/>
</dbReference>
<dbReference type="InterPro" id="IPR008979">
    <property type="entry name" value="Galactose-bd-like_sf"/>
</dbReference>
<dbReference type="InterPro" id="IPR014718">
    <property type="entry name" value="GH-type_carb-bd"/>
</dbReference>
<dbReference type="InterPro" id="IPR029413">
    <property type="entry name" value="RG-lyase_II"/>
</dbReference>
<dbReference type="InterPro" id="IPR029411">
    <property type="entry name" value="RG-lyase_III"/>
</dbReference>
<dbReference type="InterPro" id="IPR016590">
    <property type="entry name" value="Rhamnogalacturonase_B"/>
</dbReference>
<dbReference type="InterPro" id="IPR015364">
    <property type="entry name" value="RhgB_N"/>
</dbReference>
<dbReference type="PANTHER" id="PTHR36574">
    <property type="entry name" value="RHAMNOGALACTURONATE LYASE-RELATED"/>
    <property type="match status" value="1"/>
</dbReference>
<dbReference type="PANTHER" id="PTHR36574:SF1">
    <property type="entry name" value="RHAMNOGALACTURONATE LYASE-RELATED"/>
    <property type="match status" value="1"/>
</dbReference>
<dbReference type="Pfam" id="PF14683">
    <property type="entry name" value="CBM-like"/>
    <property type="match status" value="1"/>
</dbReference>
<dbReference type="Pfam" id="PF14686">
    <property type="entry name" value="fn3_3"/>
    <property type="match status" value="1"/>
</dbReference>
<dbReference type="Pfam" id="PF09284">
    <property type="entry name" value="RhgB_N"/>
    <property type="match status" value="1"/>
</dbReference>
<dbReference type="PIRSF" id="PIRSF011794">
    <property type="entry name" value="Rhamnogalacturonase_B"/>
    <property type="match status" value="1"/>
</dbReference>
<dbReference type="SUPFAM" id="SSF74650">
    <property type="entry name" value="Galactose mutarotase-like"/>
    <property type="match status" value="1"/>
</dbReference>
<dbReference type="SUPFAM" id="SSF49785">
    <property type="entry name" value="Galactose-binding domain-like"/>
    <property type="match status" value="1"/>
</dbReference>
<dbReference type="SUPFAM" id="SSF49452">
    <property type="entry name" value="Starch-binding domain-like"/>
    <property type="match status" value="1"/>
</dbReference>
<organism>
    <name type="scientific">Aspergillus clavatus (strain ATCC 1007 / CBS 513.65 / DSM 816 / NCTC 3887 / NRRL 1 / QM 1276 / 107)</name>
    <dbReference type="NCBI Taxonomy" id="344612"/>
    <lineage>
        <taxon>Eukaryota</taxon>
        <taxon>Fungi</taxon>
        <taxon>Dikarya</taxon>
        <taxon>Ascomycota</taxon>
        <taxon>Pezizomycotina</taxon>
        <taxon>Eurotiomycetes</taxon>
        <taxon>Eurotiomycetidae</taxon>
        <taxon>Eurotiales</taxon>
        <taxon>Aspergillaceae</taxon>
        <taxon>Aspergillus</taxon>
        <taxon>Aspergillus subgen. Fumigati</taxon>
    </lineage>
</organism>
<evidence type="ECO:0000250" key="1"/>
<evidence type="ECO:0000255" key="2"/>
<evidence type="ECO:0000305" key="3"/>